<evidence type="ECO:0000255" key="1"/>
<evidence type="ECO:0000256" key="2">
    <source>
        <dbReference type="SAM" id="MobiDB-lite"/>
    </source>
</evidence>
<evidence type="ECO:0000269" key="3">
    <source>
    </source>
</evidence>
<evidence type="ECO:0000269" key="4">
    <source>
    </source>
</evidence>
<evidence type="ECO:0000303" key="5">
    <source>
    </source>
</evidence>
<evidence type="ECO:0000303" key="6">
    <source ref="4"/>
</evidence>
<evidence type="ECO:0000305" key="7"/>
<evidence type="ECO:0000312" key="8">
    <source>
        <dbReference type="HGNC" id="HGNC:23018"/>
    </source>
</evidence>
<accession>Q6UE05</accession>
<accession>Q6UE04</accession>
<accession>Q8NHP4</accession>
<comment type="subcellular location">
    <subcellularLocation>
        <location evidence="7">Membrane</location>
        <topology evidence="7">Multi-pass membrane protein</topology>
    </subcellularLocation>
</comment>
<comment type="alternative products">
    <event type="alternative splicing"/>
    <isoform>
        <id>Q6UE05-1</id>
        <name>1</name>
        <sequence type="displayed"/>
    </isoform>
    <isoform>
        <id>Q6UE05-2</id>
        <name>2</name>
        <sequence type="described" ref="VSP_039997 VSP_039998"/>
    </isoform>
</comment>
<comment type="miscellaneous">
    <molecule>Isoform 2</molecule>
    <text evidence="7">May be produced at very low levels due to a premature stop codon in the mRNA, leading to nonsense-mediated mRNA decay.</text>
</comment>
<comment type="sequence caution" evidence="7">
    <conflict type="erroneous translation">
        <sequence resource="EMBL-CDS" id="AAQ74836"/>
    </conflict>
    <text>Wrong choice of CDS.</text>
</comment>
<organism>
    <name type="scientific">Homo sapiens</name>
    <name type="common">Human</name>
    <dbReference type="NCBI Taxonomy" id="9606"/>
    <lineage>
        <taxon>Eukaryota</taxon>
        <taxon>Metazoa</taxon>
        <taxon>Chordata</taxon>
        <taxon>Craniata</taxon>
        <taxon>Vertebrata</taxon>
        <taxon>Euteleostomi</taxon>
        <taxon>Mammalia</taxon>
        <taxon>Eutheria</taxon>
        <taxon>Euarchontoglires</taxon>
        <taxon>Primates</taxon>
        <taxon>Haplorrhini</taxon>
        <taxon>Catarrhini</taxon>
        <taxon>Hominidae</taxon>
        <taxon>Homo</taxon>
    </lineage>
</organism>
<proteinExistence type="evidence at protein level"/>
<dbReference type="EMBL" id="AY372053">
    <property type="protein sequence ID" value="AAQ74835.1"/>
    <property type="molecule type" value="mRNA"/>
</dbReference>
<dbReference type="EMBL" id="AY372054">
    <property type="protein sequence ID" value="AAQ74836.1"/>
    <property type="status" value="ALT_SEQ"/>
    <property type="molecule type" value="mRNA"/>
</dbReference>
<dbReference type="EMBL" id="AC093168">
    <property type="status" value="NOT_ANNOTATED_CDS"/>
    <property type="molecule type" value="Genomic_DNA"/>
</dbReference>
<dbReference type="EMBL" id="BC030643">
    <property type="protein sequence ID" value="AAH30643.1"/>
    <property type="molecule type" value="mRNA"/>
</dbReference>
<dbReference type="EMBL" id="DB455624">
    <property type="status" value="NOT_ANNOTATED_CDS"/>
    <property type="molecule type" value="mRNA"/>
</dbReference>
<dbReference type="CCDS" id="CCDS43597.1">
    <molecule id="Q6UE05-1"/>
</dbReference>
<dbReference type="RefSeq" id="NP_872310.2">
    <molecule id="Q6UE05-1"/>
    <property type="nucleotide sequence ID" value="NM_182504.4"/>
</dbReference>
<dbReference type="RefSeq" id="XP_011514087.1">
    <property type="nucleotide sequence ID" value="XM_011515785.2"/>
</dbReference>
<dbReference type="RefSeq" id="XP_016867230.1">
    <property type="nucleotide sequence ID" value="XM_017011741.1"/>
</dbReference>
<dbReference type="SMR" id="Q6UE05"/>
<dbReference type="BioGRID" id="126434">
    <property type="interactions" value="3"/>
</dbReference>
<dbReference type="FunCoup" id="Q6UE05">
    <property type="interactions" value="1"/>
</dbReference>
<dbReference type="IntAct" id="Q6UE05">
    <property type="interactions" value="1"/>
</dbReference>
<dbReference type="STRING" id="9606.ENSP00000316775"/>
<dbReference type="iPTMnet" id="Q6UE05"/>
<dbReference type="PhosphoSitePlus" id="Q6UE05"/>
<dbReference type="BioMuta" id="TMEM270"/>
<dbReference type="DMDM" id="160221324"/>
<dbReference type="MassIVE" id="Q6UE05"/>
<dbReference type="PaxDb" id="9606-ENSP00000316775"/>
<dbReference type="PeptideAtlas" id="Q6UE05"/>
<dbReference type="Antibodypedia" id="28566">
    <property type="antibodies" value="36 antibodies from 10 providers"/>
</dbReference>
<dbReference type="DNASU" id="135886"/>
<dbReference type="Ensembl" id="ENST00000320531.3">
    <molecule id="Q6UE05-1"/>
    <property type="protein sequence ID" value="ENSP00000316775.2"/>
    <property type="gene ID" value="ENSG00000175877.4"/>
</dbReference>
<dbReference type="Ensembl" id="ENST00000426490.1">
    <molecule id="Q6UE05-2"/>
    <property type="protein sequence ID" value="ENSP00000403621.1"/>
    <property type="gene ID" value="ENSG00000175877.4"/>
</dbReference>
<dbReference type="GeneID" id="135886"/>
<dbReference type="KEGG" id="hsa:135886"/>
<dbReference type="MANE-Select" id="ENST00000320531.3">
    <property type="protein sequence ID" value="ENSP00000316775.2"/>
    <property type="RefSeq nucleotide sequence ID" value="NM_182504.4"/>
    <property type="RefSeq protein sequence ID" value="NP_872310.2"/>
</dbReference>
<dbReference type="UCSC" id="uc003tzk.2">
    <molecule id="Q6UE05-1"/>
    <property type="organism name" value="human"/>
</dbReference>
<dbReference type="AGR" id="HGNC:23018"/>
<dbReference type="CTD" id="135886"/>
<dbReference type="DisGeNET" id="135886"/>
<dbReference type="GeneCards" id="TMEM270"/>
<dbReference type="HGNC" id="HGNC:23018">
    <property type="gene designation" value="TMEM270"/>
</dbReference>
<dbReference type="HPA" id="ENSG00000175877">
    <property type="expression patterns" value="Tissue enriched (testis)"/>
</dbReference>
<dbReference type="MalaCards" id="TMEM270"/>
<dbReference type="MIM" id="612547">
    <property type="type" value="gene"/>
</dbReference>
<dbReference type="neXtProt" id="NX_Q6UE05"/>
<dbReference type="OpenTargets" id="ENSG00000175877"/>
<dbReference type="Orphanet" id="904">
    <property type="disease" value="Williams syndrome"/>
</dbReference>
<dbReference type="PharmGKB" id="PA145147726"/>
<dbReference type="VEuPathDB" id="HostDB:ENSG00000175877"/>
<dbReference type="eggNOG" id="ENOG502T0K9">
    <property type="taxonomic scope" value="Eukaryota"/>
</dbReference>
<dbReference type="GeneTree" id="ENSGT00390000009243"/>
<dbReference type="HOGENOM" id="CLU_1049556_0_0_1"/>
<dbReference type="InParanoid" id="Q6UE05"/>
<dbReference type="OMA" id="LYWWVES"/>
<dbReference type="OrthoDB" id="9837709at2759"/>
<dbReference type="PAN-GO" id="Q6UE05">
    <property type="GO annotations" value="0 GO annotations based on evolutionary models"/>
</dbReference>
<dbReference type="PhylomeDB" id="Q6UE05"/>
<dbReference type="TreeFam" id="TF337697"/>
<dbReference type="PathwayCommons" id="Q6UE05"/>
<dbReference type="BioGRID-ORCS" id="135886">
    <property type="hits" value="10 hits in 1134 CRISPR screens"/>
</dbReference>
<dbReference type="ChiTaRS" id="WBSCR28">
    <property type="organism name" value="human"/>
</dbReference>
<dbReference type="GenomeRNAi" id="135886"/>
<dbReference type="Pharos" id="Q6UE05">
    <property type="development level" value="Tdark"/>
</dbReference>
<dbReference type="PRO" id="PR:Q6UE05"/>
<dbReference type="Proteomes" id="UP000005640">
    <property type="component" value="Chromosome 7"/>
</dbReference>
<dbReference type="RNAct" id="Q6UE05">
    <property type="molecule type" value="protein"/>
</dbReference>
<dbReference type="Bgee" id="ENSG00000175877">
    <property type="expression patterns" value="Expressed in right testis and 57 other cell types or tissues"/>
</dbReference>
<dbReference type="GO" id="GO:0016020">
    <property type="term" value="C:membrane"/>
    <property type="evidence" value="ECO:0007669"/>
    <property type="project" value="UniProtKB-SubCell"/>
</dbReference>
<dbReference type="InterPro" id="IPR029166">
    <property type="entry name" value="WBS28"/>
</dbReference>
<dbReference type="PANTHER" id="PTHR37369">
    <property type="entry name" value="TRANSMEMBRANE PROTEIN 270"/>
    <property type="match status" value="1"/>
</dbReference>
<dbReference type="PANTHER" id="PTHR37369:SF1">
    <property type="entry name" value="TRANSMEMBRANE PROTEIN 270"/>
    <property type="match status" value="1"/>
</dbReference>
<dbReference type="Pfam" id="PF15164">
    <property type="entry name" value="WBS28"/>
    <property type="match status" value="1"/>
</dbReference>
<reference key="1">
    <citation type="journal article" date="2008" name="Eur. J. Hum. Genet.">
        <title>Williams-Beuren syndrome TRIM50 encodes an E3 ubiquitin ligase.</title>
        <authorList>
            <person name="Micale L."/>
            <person name="Fusco C."/>
            <person name="Augello B."/>
            <person name="Napolitano L.M.R."/>
            <person name="Dermitzakis E.T."/>
            <person name="Meroni G."/>
            <person name="Merla G."/>
            <person name="Reymond A."/>
        </authorList>
    </citation>
    <scope>NUCLEOTIDE SEQUENCE [MRNA] (ISOFORM 1)</scope>
    <scope>NUCLEOTIDE SEQUENCE [MRNA] OF 14-265 (ISOFORM 2)</scope>
    <scope>VARIANTS ASN-14 AND ARG-78</scope>
</reference>
<reference key="2">
    <citation type="journal article" date="2003" name="Nature">
        <title>The DNA sequence of human chromosome 7.</title>
        <authorList>
            <person name="Hillier L.W."/>
            <person name="Fulton R.S."/>
            <person name="Fulton L.A."/>
            <person name="Graves T.A."/>
            <person name="Pepin K.H."/>
            <person name="Wagner-McPherson C."/>
            <person name="Layman D."/>
            <person name="Maas J."/>
            <person name="Jaeger S."/>
            <person name="Walker R."/>
            <person name="Wylie K."/>
            <person name="Sekhon M."/>
            <person name="Becker M.C."/>
            <person name="O'Laughlin M.D."/>
            <person name="Schaller M.E."/>
            <person name="Fewell G.A."/>
            <person name="Delehaunty K.D."/>
            <person name="Miner T.L."/>
            <person name="Nash W.E."/>
            <person name="Cordes M."/>
            <person name="Du H."/>
            <person name="Sun H."/>
            <person name="Edwards J."/>
            <person name="Bradshaw-Cordum H."/>
            <person name="Ali J."/>
            <person name="Andrews S."/>
            <person name="Isak A."/>
            <person name="Vanbrunt A."/>
            <person name="Nguyen C."/>
            <person name="Du F."/>
            <person name="Lamar B."/>
            <person name="Courtney L."/>
            <person name="Kalicki J."/>
            <person name="Ozersky P."/>
            <person name="Bielicki L."/>
            <person name="Scott K."/>
            <person name="Holmes A."/>
            <person name="Harkins R."/>
            <person name="Harris A."/>
            <person name="Strong C.M."/>
            <person name="Hou S."/>
            <person name="Tomlinson C."/>
            <person name="Dauphin-Kohlberg S."/>
            <person name="Kozlowicz-Reilly A."/>
            <person name="Leonard S."/>
            <person name="Rohlfing T."/>
            <person name="Rock S.M."/>
            <person name="Tin-Wollam A.-M."/>
            <person name="Abbott A."/>
            <person name="Minx P."/>
            <person name="Maupin R."/>
            <person name="Strowmatt C."/>
            <person name="Latreille P."/>
            <person name="Miller N."/>
            <person name="Johnson D."/>
            <person name="Murray J."/>
            <person name="Woessner J.P."/>
            <person name="Wendl M.C."/>
            <person name="Yang S.-P."/>
            <person name="Schultz B.R."/>
            <person name="Wallis J.W."/>
            <person name="Spieth J."/>
            <person name="Bieri T.A."/>
            <person name="Nelson J.O."/>
            <person name="Berkowicz N."/>
            <person name="Wohldmann P.E."/>
            <person name="Cook L.L."/>
            <person name="Hickenbotham M.T."/>
            <person name="Eldred J."/>
            <person name="Williams D."/>
            <person name="Bedell J.A."/>
            <person name="Mardis E.R."/>
            <person name="Clifton S.W."/>
            <person name="Chissoe S.L."/>
            <person name="Marra M.A."/>
            <person name="Raymond C."/>
            <person name="Haugen E."/>
            <person name="Gillett W."/>
            <person name="Zhou Y."/>
            <person name="James R."/>
            <person name="Phelps K."/>
            <person name="Iadanoto S."/>
            <person name="Bubb K."/>
            <person name="Simms E."/>
            <person name="Levy R."/>
            <person name="Clendenning J."/>
            <person name="Kaul R."/>
            <person name="Kent W.J."/>
            <person name="Furey T.S."/>
            <person name="Baertsch R.A."/>
            <person name="Brent M.R."/>
            <person name="Keibler E."/>
            <person name="Flicek P."/>
            <person name="Bork P."/>
            <person name="Suyama M."/>
            <person name="Bailey J.A."/>
            <person name="Portnoy M.E."/>
            <person name="Torrents D."/>
            <person name="Chinwalla A.T."/>
            <person name="Gish W.R."/>
            <person name="Eddy S.R."/>
            <person name="McPherson J.D."/>
            <person name="Olson M.V."/>
            <person name="Eichler E.E."/>
            <person name="Green E.D."/>
            <person name="Waterston R.H."/>
            <person name="Wilson R.K."/>
        </authorList>
    </citation>
    <scope>NUCLEOTIDE SEQUENCE [LARGE SCALE GENOMIC DNA]</scope>
</reference>
<reference key="3">
    <citation type="journal article" date="2004" name="Genome Res.">
        <title>The status, quality, and expansion of the NIH full-length cDNA project: the Mammalian Gene Collection (MGC).</title>
        <authorList>
            <consortium name="The MGC Project Team"/>
        </authorList>
    </citation>
    <scope>NUCLEOTIDE SEQUENCE [LARGE SCALE MRNA] (ISOFORM 1)</scope>
    <scope>VARIANTS ASN-14; ASP-70 AND ARG-78</scope>
    <source>
        <tissue>Testis</tissue>
    </source>
</reference>
<reference key="4">
    <citation type="submission" date="2006-03" db="EMBL/GenBank/DDBJ databases">
        <authorList>
            <person name="Arakawa T."/>
            <person name="Carninci P."/>
            <person name="Fukuda S."/>
            <person name="Hasegawa A."/>
            <person name="Hayashida K."/>
            <person name="Hori F."/>
            <person name="Kai C."/>
            <person name="Kawai J."/>
            <person name="Kojima M."/>
            <person name="Murata M."/>
            <person name="Nakamura M."/>
            <person name="Nishiyori H."/>
            <person name="Nomura K."/>
            <person name="Ohno M."/>
            <person name="Sasaki D."/>
            <person name="Shibazaki E."/>
            <person name="Tagami M."/>
            <person name="Tagami Y."/>
            <person name="Hayashizaki Y."/>
        </authorList>
    </citation>
    <scope>NUCLEOTIDE SEQUENCE [MRNA] (ISOFORM 2)</scope>
</reference>
<name>TM270_HUMAN</name>
<sequence>MEALPPVRSSLLGILLQVTRLSVLLVQNRDHLYNFLLLKINLFNHWVSGLAQEARGSCNWQAHLPLGAAACPLGQALWAGLALIQVPVWLVLQGPRLMWAGMWGSTKGLGLALLSAWEQLGLSVAIWTDLFLSCLHGLMLVALLLVVVTWRVCQKSHCFRLGRQLSKALQVNCVVRKLLVQLRRLYWWVETMTALTSWHLAYLITWTTCLASHLLQAAFEHTTQLAEAQEVEPQEVSGSSLLPSLSASSDSESGTVLPEQETPRE</sequence>
<feature type="chain" id="PRO_0000308415" description="Transmembrane protein 270">
    <location>
        <begin position="1"/>
        <end position="265"/>
    </location>
</feature>
<feature type="transmembrane region" description="Helical" evidence="1">
    <location>
        <begin position="72"/>
        <end position="92"/>
    </location>
</feature>
<feature type="transmembrane region" description="Helical" evidence="1">
    <location>
        <begin position="130"/>
        <end position="150"/>
    </location>
</feature>
<feature type="transmembrane region" description="Helical" evidence="1">
    <location>
        <begin position="185"/>
        <end position="205"/>
    </location>
</feature>
<feature type="region of interest" description="Disordered" evidence="2">
    <location>
        <begin position="229"/>
        <end position="265"/>
    </location>
</feature>
<feature type="compositionally biased region" description="Low complexity" evidence="2">
    <location>
        <begin position="237"/>
        <end position="253"/>
    </location>
</feature>
<feature type="splice variant" id="VSP_039997" description="In isoform 2." evidence="5 6">
    <original>LVQNRDHLYNFLLLKINLFNHWVSGLAQEARGSCNW</original>
    <variation>RQGLALSPSLERSGAGSARCSLQLPVSSNPPPSASK</variation>
    <location>
        <begin position="25"/>
        <end position="60"/>
    </location>
</feature>
<feature type="splice variant" id="VSP_039998" description="In isoform 2." evidence="5 6">
    <location>
        <begin position="61"/>
        <end position="265"/>
    </location>
</feature>
<feature type="sequence variant" id="VAR_036813" description="In dbSNP:rs11770052." evidence="3 4">
    <original>I</original>
    <variation>N</variation>
    <location>
        <position position="14"/>
    </location>
</feature>
<feature type="sequence variant" id="VAR_061720" description="In dbSNP:rs56933025.">
    <original>G</original>
    <variation>V</variation>
    <location>
        <position position="67"/>
    </location>
</feature>
<feature type="sequence variant" id="VAR_036814" description="In dbSNP:rs17852792." evidence="3">
    <original>A</original>
    <variation>D</variation>
    <location>
        <position position="70"/>
    </location>
</feature>
<feature type="sequence variant" id="VAR_036815" description="In dbSNP:rs13227841." evidence="3 4">
    <original>W</original>
    <variation>R</variation>
    <location>
        <position position="78"/>
    </location>
</feature>
<protein>
    <recommendedName>
        <fullName evidence="7">Transmembrane protein 270</fullName>
    </recommendedName>
    <alternativeName>
        <fullName evidence="8">Williams-Beuren syndrome chromosomal region 28 protein</fullName>
    </alternativeName>
</protein>
<keyword id="KW-0025">Alternative splicing</keyword>
<keyword id="KW-0472">Membrane</keyword>
<keyword id="KW-1267">Proteomics identification</keyword>
<keyword id="KW-1185">Reference proteome</keyword>
<keyword id="KW-0812">Transmembrane</keyword>
<keyword id="KW-1133">Transmembrane helix</keyword>
<gene>
    <name evidence="8" type="primary">TMEM270</name>
    <name evidence="8" type="synonym">WBSCR28</name>
</gene>